<protein>
    <recommendedName>
        <fullName evidence="1">Argininosuccinate synthase</fullName>
        <ecNumber evidence="1">6.3.4.5</ecNumber>
    </recommendedName>
    <alternativeName>
        <fullName evidence="1">Citrulline--aspartate ligase</fullName>
    </alternativeName>
</protein>
<reference key="1">
    <citation type="journal article" date="2010" name="Genome Biol. Evol.">
        <title>Continuing evolution of Burkholderia mallei through genome reduction and large-scale rearrangements.</title>
        <authorList>
            <person name="Losada L."/>
            <person name="Ronning C.M."/>
            <person name="DeShazer D."/>
            <person name="Woods D."/>
            <person name="Fedorova N."/>
            <person name="Kim H.S."/>
            <person name="Shabalina S.A."/>
            <person name="Pearson T.R."/>
            <person name="Brinkac L."/>
            <person name="Tan P."/>
            <person name="Nandi T."/>
            <person name="Crabtree J."/>
            <person name="Badger J."/>
            <person name="Beckstrom-Sternberg S."/>
            <person name="Saqib M."/>
            <person name="Schutzer S.E."/>
            <person name="Keim P."/>
            <person name="Nierman W.C."/>
        </authorList>
    </citation>
    <scope>NUCLEOTIDE SEQUENCE [LARGE SCALE GENOMIC DNA]</scope>
    <source>
        <strain>NCTC 10247</strain>
    </source>
</reference>
<name>ASSY_BURM7</name>
<evidence type="ECO:0000255" key="1">
    <source>
        <dbReference type="HAMAP-Rule" id="MF_00581"/>
    </source>
</evidence>
<sequence length="446" mass="49697">MTTILENLPAGQKVGIAFSGGLDTSAALHWMRIKGAVPYAYTANLGQPDEDDYDAIPKRAIQYGAEGARLIDCRAQLVAEGIAALQCGAFHISTAGVTYFNTTPIGRAVTGTMLVAAMKEDGVNIWGDGSTYKGNDIERFYRYGLLVNPDLKIYKPWLDQQFIDELGGRAEMSEFMRQAGFEYKMSAEKAYSTDSNLLGATHEAKDLESLESGIKIVNPIMGVAFWRDDVKIDKEEVTIRFEEGRPVALNGVEYKDAVALLLEANRIGGRHGLGMSDQIENRIIEAKSRGIYEAPGLALLYIAYERLVTGIHNEDTIEQYRENGRRLGRLLYQGRWFDPQAIMLRETAQRWVARAVTGEVTVELRRGNDYSIIGTRSPNLTYQPERLSMEKVQSMFSPRDRIGQLTMRNLDITDTRDKLRIYSQVGLLAAGESSALPKLKEDESGN</sequence>
<comment type="catalytic activity">
    <reaction evidence="1">
        <text>L-citrulline + L-aspartate + ATP = 2-(N(omega)-L-arginino)succinate + AMP + diphosphate + H(+)</text>
        <dbReference type="Rhea" id="RHEA:10932"/>
        <dbReference type="ChEBI" id="CHEBI:15378"/>
        <dbReference type="ChEBI" id="CHEBI:29991"/>
        <dbReference type="ChEBI" id="CHEBI:30616"/>
        <dbReference type="ChEBI" id="CHEBI:33019"/>
        <dbReference type="ChEBI" id="CHEBI:57472"/>
        <dbReference type="ChEBI" id="CHEBI:57743"/>
        <dbReference type="ChEBI" id="CHEBI:456215"/>
        <dbReference type="EC" id="6.3.4.5"/>
    </reaction>
</comment>
<comment type="pathway">
    <text evidence="1">Amino-acid biosynthesis; L-arginine biosynthesis; L-arginine from L-ornithine and carbamoyl phosphate: step 2/3.</text>
</comment>
<comment type="subunit">
    <text evidence="1">Homotetramer.</text>
</comment>
<comment type="subcellular location">
    <subcellularLocation>
        <location evidence="1">Cytoplasm</location>
    </subcellularLocation>
</comment>
<comment type="similarity">
    <text evidence="1">Belongs to the argininosuccinate synthase family. Type 2 subfamily.</text>
</comment>
<feature type="chain" id="PRO_1000025411" description="Argininosuccinate synthase">
    <location>
        <begin position="1"/>
        <end position="446"/>
    </location>
</feature>
<feature type="binding site" evidence="1">
    <location>
        <begin position="17"/>
        <end position="25"/>
    </location>
    <ligand>
        <name>ATP</name>
        <dbReference type="ChEBI" id="CHEBI:30616"/>
    </ligand>
</feature>
<feature type="binding site" evidence="1">
    <location>
        <position position="43"/>
    </location>
    <ligand>
        <name>ATP</name>
        <dbReference type="ChEBI" id="CHEBI:30616"/>
    </ligand>
</feature>
<feature type="binding site" evidence="1">
    <location>
        <position position="99"/>
    </location>
    <ligand>
        <name>L-citrulline</name>
        <dbReference type="ChEBI" id="CHEBI:57743"/>
    </ligand>
</feature>
<feature type="binding site" evidence="1">
    <location>
        <position position="129"/>
    </location>
    <ligand>
        <name>ATP</name>
        <dbReference type="ChEBI" id="CHEBI:30616"/>
    </ligand>
</feature>
<feature type="binding site" evidence="1">
    <location>
        <position position="131"/>
    </location>
    <ligand>
        <name>ATP</name>
        <dbReference type="ChEBI" id="CHEBI:30616"/>
    </ligand>
</feature>
<feature type="binding site" evidence="1">
    <location>
        <position position="131"/>
    </location>
    <ligand>
        <name>L-aspartate</name>
        <dbReference type="ChEBI" id="CHEBI:29991"/>
    </ligand>
</feature>
<feature type="binding site" evidence="1">
    <location>
        <position position="135"/>
    </location>
    <ligand>
        <name>L-aspartate</name>
        <dbReference type="ChEBI" id="CHEBI:29991"/>
    </ligand>
</feature>
<feature type="binding site" evidence="1">
    <location>
        <position position="135"/>
    </location>
    <ligand>
        <name>L-citrulline</name>
        <dbReference type="ChEBI" id="CHEBI:57743"/>
    </ligand>
</feature>
<feature type="binding site" evidence="1">
    <location>
        <position position="136"/>
    </location>
    <ligand>
        <name>ATP</name>
        <dbReference type="ChEBI" id="CHEBI:30616"/>
    </ligand>
</feature>
<feature type="binding site" evidence="1">
    <location>
        <position position="136"/>
    </location>
    <ligand>
        <name>L-aspartate</name>
        <dbReference type="ChEBI" id="CHEBI:29991"/>
    </ligand>
</feature>
<feature type="binding site" evidence="1">
    <location>
        <position position="139"/>
    </location>
    <ligand>
        <name>L-citrulline</name>
        <dbReference type="ChEBI" id="CHEBI:57743"/>
    </ligand>
</feature>
<feature type="binding site" evidence="1">
    <location>
        <position position="192"/>
    </location>
    <ligand>
        <name>L-citrulline</name>
        <dbReference type="ChEBI" id="CHEBI:57743"/>
    </ligand>
</feature>
<feature type="binding site" evidence="1">
    <location>
        <position position="194"/>
    </location>
    <ligand>
        <name>ATP</name>
        <dbReference type="ChEBI" id="CHEBI:30616"/>
    </ligand>
</feature>
<feature type="binding site" evidence="1">
    <location>
        <position position="201"/>
    </location>
    <ligand>
        <name>L-citrulline</name>
        <dbReference type="ChEBI" id="CHEBI:57743"/>
    </ligand>
</feature>
<feature type="binding site" evidence="1">
    <location>
        <position position="203"/>
    </location>
    <ligand>
        <name>L-citrulline</name>
        <dbReference type="ChEBI" id="CHEBI:57743"/>
    </ligand>
</feature>
<feature type="binding site" evidence="1">
    <location>
        <position position="280"/>
    </location>
    <ligand>
        <name>L-citrulline</name>
        <dbReference type="ChEBI" id="CHEBI:57743"/>
    </ligand>
</feature>
<proteinExistence type="inferred from homology"/>
<accession>A3MNB7</accession>
<organism>
    <name type="scientific">Burkholderia mallei (strain NCTC 10247)</name>
    <dbReference type="NCBI Taxonomy" id="320389"/>
    <lineage>
        <taxon>Bacteria</taxon>
        <taxon>Pseudomonadati</taxon>
        <taxon>Pseudomonadota</taxon>
        <taxon>Betaproteobacteria</taxon>
        <taxon>Burkholderiales</taxon>
        <taxon>Burkholderiaceae</taxon>
        <taxon>Burkholderia</taxon>
        <taxon>pseudomallei group</taxon>
    </lineage>
</organism>
<gene>
    <name evidence="1" type="primary">argG</name>
    <name type="ordered locus">BMA10247_2224</name>
</gene>
<keyword id="KW-0028">Amino-acid biosynthesis</keyword>
<keyword id="KW-0055">Arginine biosynthesis</keyword>
<keyword id="KW-0067">ATP-binding</keyword>
<keyword id="KW-0963">Cytoplasm</keyword>
<keyword id="KW-0436">Ligase</keyword>
<keyword id="KW-0547">Nucleotide-binding</keyword>
<dbReference type="EC" id="6.3.4.5" evidence="1"/>
<dbReference type="EMBL" id="CP000548">
    <property type="protein sequence ID" value="ABO06880.1"/>
    <property type="molecule type" value="Genomic_DNA"/>
</dbReference>
<dbReference type="RefSeq" id="WP_004189990.1">
    <property type="nucleotide sequence ID" value="NZ_CP007802.1"/>
</dbReference>
<dbReference type="SMR" id="A3MNB7"/>
<dbReference type="GeneID" id="93058813"/>
<dbReference type="KEGG" id="bmaz:BM44_1021"/>
<dbReference type="KEGG" id="bmn:BMA10247_2224"/>
<dbReference type="PATRIC" id="fig|320389.8.peg.1138"/>
<dbReference type="UniPathway" id="UPA00068">
    <property type="reaction ID" value="UER00113"/>
</dbReference>
<dbReference type="GO" id="GO:0005737">
    <property type="term" value="C:cytoplasm"/>
    <property type="evidence" value="ECO:0007669"/>
    <property type="project" value="UniProtKB-SubCell"/>
</dbReference>
<dbReference type="GO" id="GO:0004055">
    <property type="term" value="F:argininosuccinate synthase activity"/>
    <property type="evidence" value="ECO:0007669"/>
    <property type="project" value="UniProtKB-UniRule"/>
</dbReference>
<dbReference type="GO" id="GO:0005524">
    <property type="term" value="F:ATP binding"/>
    <property type="evidence" value="ECO:0007669"/>
    <property type="project" value="UniProtKB-UniRule"/>
</dbReference>
<dbReference type="GO" id="GO:0042803">
    <property type="term" value="F:protein homodimerization activity"/>
    <property type="evidence" value="ECO:0007669"/>
    <property type="project" value="InterPro"/>
</dbReference>
<dbReference type="GO" id="GO:0000053">
    <property type="term" value="P:argininosuccinate metabolic process"/>
    <property type="evidence" value="ECO:0007669"/>
    <property type="project" value="TreeGrafter"/>
</dbReference>
<dbReference type="GO" id="GO:0006526">
    <property type="term" value="P:L-arginine biosynthetic process"/>
    <property type="evidence" value="ECO:0007669"/>
    <property type="project" value="UniProtKB-UniRule"/>
</dbReference>
<dbReference type="GO" id="GO:0000050">
    <property type="term" value="P:urea cycle"/>
    <property type="evidence" value="ECO:0007669"/>
    <property type="project" value="TreeGrafter"/>
</dbReference>
<dbReference type="CDD" id="cd01999">
    <property type="entry name" value="ASS"/>
    <property type="match status" value="1"/>
</dbReference>
<dbReference type="FunFam" id="1.10.287.400:FF:000001">
    <property type="entry name" value="Argininosuccinate synthase"/>
    <property type="match status" value="1"/>
</dbReference>
<dbReference type="Gene3D" id="1.10.287.400">
    <property type="match status" value="1"/>
</dbReference>
<dbReference type="Gene3D" id="3.90.1260.10">
    <property type="entry name" value="Argininosuccinate synthetase, chain A, domain 2"/>
    <property type="match status" value="1"/>
</dbReference>
<dbReference type="Gene3D" id="3.40.50.620">
    <property type="entry name" value="HUPs"/>
    <property type="match status" value="1"/>
</dbReference>
<dbReference type="HAMAP" id="MF_00581">
    <property type="entry name" value="Arg_succ_synth_type2"/>
    <property type="match status" value="1"/>
</dbReference>
<dbReference type="InterPro" id="IPR023437">
    <property type="entry name" value="Arg_succ_synth_type2_subfam"/>
</dbReference>
<dbReference type="InterPro" id="IPR048268">
    <property type="entry name" value="Arginosuc_syn_C"/>
</dbReference>
<dbReference type="InterPro" id="IPR048267">
    <property type="entry name" value="Arginosuc_syn_N"/>
</dbReference>
<dbReference type="InterPro" id="IPR001518">
    <property type="entry name" value="Arginosuc_synth"/>
</dbReference>
<dbReference type="InterPro" id="IPR018223">
    <property type="entry name" value="Arginosuc_synth_CS"/>
</dbReference>
<dbReference type="InterPro" id="IPR023434">
    <property type="entry name" value="Arginosuc_synth_type_1_subfam"/>
</dbReference>
<dbReference type="InterPro" id="IPR024074">
    <property type="entry name" value="AS_cat/multimer_dom_body"/>
</dbReference>
<dbReference type="InterPro" id="IPR024073">
    <property type="entry name" value="AS_multimer_C_tail"/>
</dbReference>
<dbReference type="InterPro" id="IPR014729">
    <property type="entry name" value="Rossmann-like_a/b/a_fold"/>
</dbReference>
<dbReference type="NCBIfam" id="TIGR00032">
    <property type="entry name" value="argG"/>
    <property type="match status" value="1"/>
</dbReference>
<dbReference type="NCBIfam" id="NF003779">
    <property type="entry name" value="PRK05370.1"/>
    <property type="match status" value="1"/>
</dbReference>
<dbReference type="PANTHER" id="PTHR11587">
    <property type="entry name" value="ARGININOSUCCINATE SYNTHASE"/>
    <property type="match status" value="1"/>
</dbReference>
<dbReference type="PANTHER" id="PTHR11587:SF2">
    <property type="entry name" value="ARGININOSUCCINATE SYNTHASE"/>
    <property type="match status" value="1"/>
</dbReference>
<dbReference type="Pfam" id="PF20979">
    <property type="entry name" value="Arginosuc_syn_C"/>
    <property type="match status" value="1"/>
</dbReference>
<dbReference type="Pfam" id="PF00764">
    <property type="entry name" value="Arginosuc_synth"/>
    <property type="match status" value="1"/>
</dbReference>
<dbReference type="SUPFAM" id="SSF52402">
    <property type="entry name" value="Adenine nucleotide alpha hydrolases-like"/>
    <property type="match status" value="1"/>
</dbReference>
<dbReference type="SUPFAM" id="SSF69864">
    <property type="entry name" value="Argininosuccinate synthetase, C-terminal domain"/>
    <property type="match status" value="1"/>
</dbReference>
<dbReference type="PROSITE" id="PS00564">
    <property type="entry name" value="ARGININOSUCCIN_SYN_1"/>
    <property type="match status" value="1"/>
</dbReference>
<dbReference type="PROSITE" id="PS00565">
    <property type="entry name" value="ARGININOSUCCIN_SYN_2"/>
    <property type="match status" value="1"/>
</dbReference>